<name>STXB3_HUMAN</name>
<feature type="chain" id="PRO_0000206285" description="Syntaxin-binding protein 3">
    <location>
        <begin position="1"/>
        <end position="592"/>
    </location>
</feature>
<feature type="region of interest" description="Mediates interaction with DOC2B" evidence="1">
    <location>
        <begin position="1"/>
        <end position="255"/>
    </location>
</feature>
<feature type="sequence variant" id="VAR_052470" description="In dbSNP:rs2275344.">
    <original>R</original>
    <variation>Q</variation>
    <location>
        <position position="295"/>
    </location>
</feature>
<feature type="sequence variant" id="VAR_017570" description="In dbSNP:rs1044136." evidence="3">
    <original>E</original>
    <variation>G</variation>
    <location>
        <position position="433"/>
    </location>
</feature>
<feature type="sequence variant" id="VAR_017571" description="In dbSNP:rs1044137." evidence="3">
    <original>C</original>
    <variation>G</variation>
    <location>
        <position position="546"/>
    </location>
</feature>
<feature type="sequence conflict" description="In Ref. 7; AAH38099." evidence="4" ref="7">
    <original>K</original>
    <variation>R</variation>
    <location>
        <position position="104"/>
    </location>
</feature>
<feature type="sequence conflict" description="In Ref. 7; AAH38099." evidence="4" ref="7">
    <original>L</original>
    <variation>R</variation>
    <location>
        <position position="150"/>
    </location>
</feature>
<feature type="sequence conflict" description="In Ref. 4; BAD96890." evidence="4" ref="4">
    <original>F</original>
    <variation>I</variation>
    <location>
        <position position="242"/>
    </location>
</feature>
<feature type="sequence conflict" description="In Ref. 1; BAA19482." evidence="4" ref="1">
    <original>E</original>
    <variation>G</variation>
    <location>
        <position position="277"/>
    </location>
</feature>
<feature type="sequence conflict" description="In Ref. 3; BAF84011." evidence="4" ref="3">
    <original>E</original>
    <variation>D</variation>
    <location>
        <position position="285"/>
    </location>
</feature>
<organism>
    <name type="scientific">Homo sapiens</name>
    <name type="common">Human</name>
    <dbReference type="NCBI Taxonomy" id="9606"/>
    <lineage>
        <taxon>Eukaryota</taxon>
        <taxon>Metazoa</taxon>
        <taxon>Chordata</taxon>
        <taxon>Craniata</taxon>
        <taxon>Vertebrata</taxon>
        <taxon>Euteleostomi</taxon>
        <taxon>Mammalia</taxon>
        <taxon>Eutheria</taxon>
        <taxon>Euarchontoglires</taxon>
        <taxon>Primates</taxon>
        <taxon>Haplorrhini</taxon>
        <taxon>Catarrhini</taxon>
        <taxon>Hominidae</taxon>
        <taxon>Homo</taxon>
    </lineage>
</organism>
<protein>
    <recommendedName>
        <fullName>Syntaxin-binding protein 3</fullName>
    </recommendedName>
    <alternativeName>
        <fullName>Platelet Sec1 protein</fullName>
        <shortName>PSP</shortName>
    </alternativeName>
    <alternativeName>
        <fullName>Protein unc-18 homolog 3</fullName>
        <shortName>Unc18-3</shortName>
    </alternativeName>
    <alternativeName>
        <fullName>Protein unc-18 homolog C</fullName>
        <shortName>Unc-18C</shortName>
    </alternativeName>
</protein>
<comment type="function">
    <text evidence="1">Together with STX4 and VAMP2, may play a role in insulin-dependent movement of GLUT4 and in docking/fusion of intracellular GLUT4-containing vesicles with the cell surface in adipocytes.</text>
</comment>
<comment type="subunit">
    <text evidence="1 2">Interacts with DOC2B; the interaction is direct, occurs at the cell membrane, excludes interaction with STX4 and regulates glucose-stimulated insulin secretion (By similarity). Interacts with STX4.</text>
</comment>
<comment type="subcellular location">
    <subcellularLocation>
        <location evidence="2">Cytoplasm</location>
        <location evidence="2">Cytosol</location>
    </subcellularLocation>
    <subcellularLocation>
        <location evidence="2">Cell membrane</location>
    </subcellularLocation>
    <text>In platelets, predominantly cytosolic. Low amounts membrane-associated.</text>
</comment>
<comment type="tissue specificity">
    <text>Megakaryocytes and platelets.</text>
</comment>
<comment type="PTM">
    <text evidence="2">Phosphorylated by PKC in platelets in response to thrombin stimulation; phosphorylation inhibits binding to STX4.</text>
</comment>
<comment type="similarity">
    <text evidence="4">Belongs to the STXBP/unc-18/SEC1 family.</text>
</comment>
<reference key="1">
    <citation type="journal article" date="1996" name="J. Neurosci.">
        <title>A murine neural-specific homolog corrects cholinergic defects in Caenorhabditis elegans unc-18 mutants.</title>
        <authorList>
            <person name="Gengyo-Ando K."/>
            <person name="Kitayama H."/>
            <person name="Mukaida M."/>
            <person name="Ikawa Y."/>
        </authorList>
    </citation>
    <scope>NUCLEOTIDE SEQUENCE [MRNA]</scope>
    <scope>VARIANTS GLY-433 AND GLY-546</scope>
    <source>
        <tissue>Brain</tissue>
    </source>
</reference>
<reference key="2">
    <citation type="journal article" date="1999" name="Blood">
        <title>Human platelets contain SNARE proteins and a Sec1p homologue that interacts with syntaxin 4 and is phosphorylated after thrombin activation: implications for platelet secretion.</title>
        <authorList>
            <person name="Reed G.L."/>
            <person name="Houng A.K."/>
            <person name="Fitzgerald M.L."/>
        </authorList>
    </citation>
    <scope>NUCLEOTIDE SEQUENCE [MRNA]</scope>
    <scope>INTERACTION WITH STX4</scope>
    <scope>SUBCELLULAR LOCATION</scope>
    <scope>PHOSPHORYLATION</scope>
    <source>
        <tissue>Leukemic T-cell</tissue>
    </source>
</reference>
<reference key="3">
    <citation type="journal article" date="2004" name="Nat. Genet.">
        <title>Complete sequencing and characterization of 21,243 full-length human cDNAs.</title>
        <authorList>
            <person name="Ota T."/>
            <person name="Suzuki Y."/>
            <person name="Nishikawa T."/>
            <person name="Otsuki T."/>
            <person name="Sugiyama T."/>
            <person name="Irie R."/>
            <person name="Wakamatsu A."/>
            <person name="Hayashi K."/>
            <person name="Sato H."/>
            <person name="Nagai K."/>
            <person name="Kimura K."/>
            <person name="Makita H."/>
            <person name="Sekine M."/>
            <person name="Obayashi M."/>
            <person name="Nishi T."/>
            <person name="Shibahara T."/>
            <person name="Tanaka T."/>
            <person name="Ishii S."/>
            <person name="Yamamoto J."/>
            <person name="Saito K."/>
            <person name="Kawai Y."/>
            <person name="Isono Y."/>
            <person name="Nakamura Y."/>
            <person name="Nagahari K."/>
            <person name="Murakami K."/>
            <person name="Yasuda T."/>
            <person name="Iwayanagi T."/>
            <person name="Wagatsuma M."/>
            <person name="Shiratori A."/>
            <person name="Sudo H."/>
            <person name="Hosoiri T."/>
            <person name="Kaku Y."/>
            <person name="Kodaira H."/>
            <person name="Kondo H."/>
            <person name="Sugawara M."/>
            <person name="Takahashi M."/>
            <person name="Kanda K."/>
            <person name="Yokoi T."/>
            <person name="Furuya T."/>
            <person name="Kikkawa E."/>
            <person name="Omura Y."/>
            <person name="Abe K."/>
            <person name="Kamihara K."/>
            <person name="Katsuta N."/>
            <person name="Sato K."/>
            <person name="Tanikawa M."/>
            <person name="Yamazaki M."/>
            <person name="Ninomiya K."/>
            <person name="Ishibashi T."/>
            <person name="Yamashita H."/>
            <person name="Murakawa K."/>
            <person name="Fujimori K."/>
            <person name="Tanai H."/>
            <person name="Kimata M."/>
            <person name="Watanabe M."/>
            <person name="Hiraoka S."/>
            <person name="Chiba Y."/>
            <person name="Ishida S."/>
            <person name="Ono Y."/>
            <person name="Takiguchi S."/>
            <person name="Watanabe S."/>
            <person name="Yosida M."/>
            <person name="Hotuta T."/>
            <person name="Kusano J."/>
            <person name="Kanehori K."/>
            <person name="Takahashi-Fujii A."/>
            <person name="Hara H."/>
            <person name="Tanase T.-O."/>
            <person name="Nomura Y."/>
            <person name="Togiya S."/>
            <person name="Komai F."/>
            <person name="Hara R."/>
            <person name="Takeuchi K."/>
            <person name="Arita M."/>
            <person name="Imose N."/>
            <person name="Musashino K."/>
            <person name="Yuuki H."/>
            <person name="Oshima A."/>
            <person name="Sasaki N."/>
            <person name="Aotsuka S."/>
            <person name="Yoshikawa Y."/>
            <person name="Matsunawa H."/>
            <person name="Ichihara T."/>
            <person name="Shiohata N."/>
            <person name="Sano S."/>
            <person name="Moriya S."/>
            <person name="Momiyama H."/>
            <person name="Satoh N."/>
            <person name="Takami S."/>
            <person name="Terashima Y."/>
            <person name="Suzuki O."/>
            <person name="Nakagawa S."/>
            <person name="Senoh A."/>
            <person name="Mizoguchi H."/>
            <person name="Goto Y."/>
            <person name="Shimizu F."/>
            <person name="Wakebe H."/>
            <person name="Hishigaki H."/>
            <person name="Watanabe T."/>
            <person name="Sugiyama A."/>
            <person name="Takemoto M."/>
            <person name="Kawakami B."/>
            <person name="Yamazaki M."/>
            <person name="Watanabe K."/>
            <person name="Kumagai A."/>
            <person name="Itakura S."/>
            <person name="Fukuzumi Y."/>
            <person name="Fujimori Y."/>
            <person name="Komiyama M."/>
            <person name="Tashiro H."/>
            <person name="Tanigami A."/>
            <person name="Fujiwara T."/>
            <person name="Ono T."/>
            <person name="Yamada K."/>
            <person name="Fujii Y."/>
            <person name="Ozaki K."/>
            <person name="Hirao M."/>
            <person name="Ohmori Y."/>
            <person name="Kawabata A."/>
            <person name="Hikiji T."/>
            <person name="Kobatake N."/>
            <person name="Inagaki H."/>
            <person name="Ikema Y."/>
            <person name="Okamoto S."/>
            <person name="Okitani R."/>
            <person name="Kawakami T."/>
            <person name="Noguchi S."/>
            <person name="Itoh T."/>
            <person name="Shigeta K."/>
            <person name="Senba T."/>
            <person name="Matsumura K."/>
            <person name="Nakajima Y."/>
            <person name="Mizuno T."/>
            <person name="Morinaga M."/>
            <person name="Sasaki M."/>
            <person name="Togashi T."/>
            <person name="Oyama M."/>
            <person name="Hata H."/>
            <person name="Watanabe M."/>
            <person name="Komatsu T."/>
            <person name="Mizushima-Sugano J."/>
            <person name="Satoh T."/>
            <person name="Shirai Y."/>
            <person name="Takahashi Y."/>
            <person name="Nakagawa K."/>
            <person name="Okumura K."/>
            <person name="Nagase T."/>
            <person name="Nomura N."/>
            <person name="Kikuchi H."/>
            <person name="Masuho Y."/>
            <person name="Yamashita R."/>
            <person name="Nakai K."/>
            <person name="Yada T."/>
            <person name="Nakamura Y."/>
            <person name="Ohara O."/>
            <person name="Isogai T."/>
            <person name="Sugano S."/>
        </authorList>
    </citation>
    <scope>NUCLEOTIDE SEQUENCE [LARGE SCALE MRNA]</scope>
    <source>
        <tissue>Thalamus</tissue>
        <tissue>Tongue</tissue>
    </source>
</reference>
<reference key="4">
    <citation type="submission" date="2005-04" db="EMBL/GenBank/DDBJ databases">
        <authorList>
            <person name="Suzuki Y."/>
            <person name="Sugano S."/>
            <person name="Totoki Y."/>
            <person name="Toyoda A."/>
            <person name="Takeda T."/>
            <person name="Sakaki Y."/>
            <person name="Tanaka A."/>
            <person name="Yokoyama S."/>
        </authorList>
    </citation>
    <scope>NUCLEOTIDE SEQUENCE [LARGE SCALE MRNA]</scope>
    <source>
        <tissue>Lung</tissue>
    </source>
</reference>
<reference key="5">
    <citation type="journal article" date="2006" name="Nature">
        <title>The DNA sequence and biological annotation of human chromosome 1.</title>
        <authorList>
            <person name="Gregory S.G."/>
            <person name="Barlow K.F."/>
            <person name="McLay K.E."/>
            <person name="Kaul R."/>
            <person name="Swarbreck D."/>
            <person name="Dunham A."/>
            <person name="Scott C.E."/>
            <person name="Howe K.L."/>
            <person name="Woodfine K."/>
            <person name="Spencer C.C.A."/>
            <person name="Jones M.C."/>
            <person name="Gillson C."/>
            <person name="Searle S."/>
            <person name="Zhou Y."/>
            <person name="Kokocinski F."/>
            <person name="McDonald L."/>
            <person name="Evans R."/>
            <person name="Phillips K."/>
            <person name="Atkinson A."/>
            <person name="Cooper R."/>
            <person name="Jones C."/>
            <person name="Hall R.E."/>
            <person name="Andrews T.D."/>
            <person name="Lloyd C."/>
            <person name="Ainscough R."/>
            <person name="Almeida J.P."/>
            <person name="Ambrose K.D."/>
            <person name="Anderson F."/>
            <person name="Andrew R.W."/>
            <person name="Ashwell R.I.S."/>
            <person name="Aubin K."/>
            <person name="Babbage A.K."/>
            <person name="Bagguley C.L."/>
            <person name="Bailey J."/>
            <person name="Beasley H."/>
            <person name="Bethel G."/>
            <person name="Bird C.P."/>
            <person name="Bray-Allen S."/>
            <person name="Brown J.Y."/>
            <person name="Brown A.J."/>
            <person name="Buckley D."/>
            <person name="Burton J."/>
            <person name="Bye J."/>
            <person name="Carder C."/>
            <person name="Chapman J.C."/>
            <person name="Clark S.Y."/>
            <person name="Clarke G."/>
            <person name="Clee C."/>
            <person name="Cobley V."/>
            <person name="Collier R.E."/>
            <person name="Corby N."/>
            <person name="Coville G.J."/>
            <person name="Davies J."/>
            <person name="Deadman R."/>
            <person name="Dunn M."/>
            <person name="Earthrowl M."/>
            <person name="Ellington A.G."/>
            <person name="Errington H."/>
            <person name="Frankish A."/>
            <person name="Frankland J."/>
            <person name="French L."/>
            <person name="Garner P."/>
            <person name="Garnett J."/>
            <person name="Gay L."/>
            <person name="Ghori M.R.J."/>
            <person name="Gibson R."/>
            <person name="Gilby L.M."/>
            <person name="Gillett W."/>
            <person name="Glithero R.J."/>
            <person name="Grafham D.V."/>
            <person name="Griffiths C."/>
            <person name="Griffiths-Jones S."/>
            <person name="Grocock R."/>
            <person name="Hammond S."/>
            <person name="Harrison E.S.I."/>
            <person name="Hart E."/>
            <person name="Haugen E."/>
            <person name="Heath P.D."/>
            <person name="Holmes S."/>
            <person name="Holt K."/>
            <person name="Howden P.J."/>
            <person name="Hunt A.R."/>
            <person name="Hunt S.E."/>
            <person name="Hunter G."/>
            <person name="Isherwood J."/>
            <person name="James R."/>
            <person name="Johnson C."/>
            <person name="Johnson D."/>
            <person name="Joy A."/>
            <person name="Kay M."/>
            <person name="Kershaw J.K."/>
            <person name="Kibukawa M."/>
            <person name="Kimberley A.M."/>
            <person name="King A."/>
            <person name="Knights A.J."/>
            <person name="Lad H."/>
            <person name="Laird G."/>
            <person name="Lawlor S."/>
            <person name="Leongamornlert D.A."/>
            <person name="Lloyd D.M."/>
            <person name="Loveland J."/>
            <person name="Lovell J."/>
            <person name="Lush M.J."/>
            <person name="Lyne R."/>
            <person name="Martin S."/>
            <person name="Mashreghi-Mohammadi M."/>
            <person name="Matthews L."/>
            <person name="Matthews N.S.W."/>
            <person name="McLaren S."/>
            <person name="Milne S."/>
            <person name="Mistry S."/>
            <person name="Moore M.J.F."/>
            <person name="Nickerson T."/>
            <person name="O'Dell C.N."/>
            <person name="Oliver K."/>
            <person name="Palmeiri A."/>
            <person name="Palmer S.A."/>
            <person name="Parker A."/>
            <person name="Patel D."/>
            <person name="Pearce A.V."/>
            <person name="Peck A.I."/>
            <person name="Pelan S."/>
            <person name="Phelps K."/>
            <person name="Phillimore B.J."/>
            <person name="Plumb R."/>
            <person name="Rajan J."/>
            <person name="Raymond C."/>
            <person name="Rouse G."/>
            <person name="Saenphimmachak C."/>
            <person name="Sehra H.K."/>
            <person name="Sheridan E."/>
            <person name="Shownkeen R."/>
            <person name="Sims S."/>
            <person name="Skuce C.D."/>
            <person name="Smith M."/>
            <person name="Steward C."/>
            <person name="Subramanian S."/>
            <person name="Sycamore N."/>
            <person name="Tracey A."/>
            <person name="Tromans A."/>
            <person name="Van Helmond Z."/>
            <person name="Wall M."/>
            <person name="Wallis J.M."/>
            <person name="White S."/>
            <person name="Whitehead S.L."/>
            <person name="Wilkinson J.E."/>
            <person name="Willey D.L."/>
            <person name="Williams H."/>
            <person name="Wilming L."/>
            <person name="Wray P.W."/>
            <person name="Wu Z."/>
            <person name="Coulson A."/>
            <person name="Vaudin M."/>
            <person name="Sulston J.E."/>
            <person name="Durbin R.M."/>
            <person name="Hubbard T."/>
            <person name="Wooster R."/>
            <person name="Dunham I."/>
            <person name="Carter N.P."/>
            <person name="McVean G."/>
            <person name="Ross M.T."/>
            <person name="Harrow J."/>
            <person name="Olson M.V."/>
            <person name="Beck S."/>
            <person name="Rogers J."/>
            <person name="Bentley D.R."/>
        </authorList>
    </citation>
    <scope>NUCLEOTIDE SEQUENCE [LARGE SCALE GENOMIC DNA]</scope>
</reference>
<reference key="6">
    <citation type="submission" date="2005-07" db="EMBL/GenBank/DDBJ databases">
        <authorList>
            <person name="Mural R.J."/>
            <person name="Istrail S."/>
            <person name="Sutton G.G."/>
            <person name="Florea L."/>
            <person name="Halpern A.L."/>
            <person name="Mobarry C.M."/>
            <person name="Lippert R."/>
            <person name="Walenz B."/>
            <person name="Shatkay H."/>
            <person name="Dew I."/>
            <person name="Miller J.R."/>
            <person name="Flanigan M.J."/>
            <person name="Edwards N.J."/>
            <person name="Bolanos R."/>
            <person name="Fasulo D."/>
            <person name="Halldorsson B.V."/>
            <person name="Hannenhalli S."/>
            <person name="Turner R."/>
            <person name="Yooseph S."/>
            <person name="Lu F."/>
            <person name="Nusskern D.R."/>
            <person name="Shue B.C."/>
            <person name="Zheng X.H."/>
            <person name="Zhong F."/>
            <person name="Delcher A.L."/>
            <person name="Huson D.H."/>
            <person name="Kravitz S.A."/>
            <person name="Mouchard L."/>
            <person name="Reinert K."/>
            <person name="Remington K.A."/>
            <person name="Clark A.G."/>
            <person name="Waterman M.S."/>
            <person name="Eichler E.E."/>
            <person name="Adams M.D."/>
            <person name="Hunkapiller M.W."/>
            <person name="Myers E.W."/>
            <person name="Venter J.C."/>
        </authorList>
    </citation>
    <scope>NUCLEOTIDE SEQUENCE [LARGE SCALE GENOMIC DNA]</scope>
</reference>
<reference key="7">
    <citation type="journal article" date="2004" name="Genome Res.">
        <title>The status, quality, and expansion of the NIH full-length cDNA project: the Mammalian Gene Collection (MGC).</title>
        <authorList>
            <consortium name="The MGC Project Team"/>
        </authorList>
    </citation>
    <scope>NUCLEOTIDE SEQUENCE [LARGE SCALE MRNA]</scope>
    <source>
        <tissue>Testis</tissue>
    </source>
</reference>
<reference key="8">
    <citation type="journal article" date="2011" name="BMC Syst. Biol.">
        <title>Initial characterization of the human central proteome.</title>
        <authorList>
            <person name="Burkard T.R."/>
            <person name="Planyavsky M."/>
            <person name="Kaupe I."/>
            <person name="Breitwieser F.P."/>
            <person name="Buerckstuemmer T."/>
            <person name="Bennett K.L."/>
            <person name="Superti-Furga G."/>
            <person name="Colinge J."/>
        </authorList>
    </citation>
    <scope>IDENTIFICATION BY MASS SPECTROMETRY [LARGE SCALE ANALYSIS]</scope>
</reference>
<reference key="9">
    <citation type="journal article" date="2014" name="J. Proteomics">
        <title>An enzyme assisted RP-RPLC approach for in-depth analysis of human liver phosphoproteome.</title>
        <authorList>
            <person name="Bian Y."/>
            <person name="Song C."/>
            <person name="Cheng K."/>
            <person name="Dong M."/>
            <person name="Wang F."/>
            <person name="Huang J."/>
            <person name="Sun D."/>
            <person name="Wang L."/>
            <person name="Ye M."/>
            <person name="Zou H."/>
        </authorList>
    </citation>
    <scope>IDENTIFICATION BY MASS SPECTROMETRY [LARGE SCALE ANALYSIS]</scope>
    <source>
        <tissue>Liver</tissue>
    </source>
</reference>
<proteinExistence type="evidence at protein level"/>
<evidence type="ECO:0000250" key="1"/>
<evidence type="ECO:0000269" key="2">
    <source>
    </source>
</evidence>
<evidence type="ECO:0000269" key="3">
    <source>
    </source>
</evidence>
<evidence type="ECO:0000305" key="4"/>
<sequence>MAPPVAERGLKSVVWQKIKATVFDDCKKEGEWKIMLLDEFTTKLLASCCKMTDLLEEGITVVENIYKNREPVRQMKALYFITPTSKSVDCFLHDFASKSENKYKAAYIYFTDFCPDNLFNKIKASCSKSIRRCKEINISFIPHESQVYTLDVPDAFYYCYSPDPGNAKGKDAIMETMADQIVTVCATLDENPGVRYKSKPLDNASKLAQLVEKKLEDYYKIDEKSLIKGKTHSQLLIIDRGFDPVSTVLHELTFQAMAYDLLPIENDTYKYKTDGKEKEAILEEEDDLWVRIRHRHIAVVLEEIPKLMKEISSTKKATEGKTSLSALTQLMKKMPHFRKQITKQVVHLNLAEDCMNKFKLNIEKLCKTEQDLALGTDAEGQKVKDSMRVLLPVLLNKNHDNCDKIRAILLYIFSINGTTEENLDRLIQNVKIENESDMIRNWSYLGVPIVPQSQQGKPLRKDRSAEETFQLSRWTPFIKDIMEDAIDNRLDSKEWPYCSQCPAVWNGSGAVSARQKPRANYLEDRKNGSKLIVFVIGGITYSEVRCAYEVSQAHKSCEVIIGSTHVLTPKKLLDDIKMLNKPKDKVSLIKDE</sequence>
<keyword id="KW-1003">Cell membrane</keyword>
<keyword id="KW-0963">Cytoplasm</keyword>
<keyword id="KW-0472">Membrane</keyword>
<keyword id="KW-0597">Phosphoprotein</keyword>
<keyword id="KW-0653">Protein transport</keyword>
<keyword id="KW-1267">Proteomics identification</keyword>
<keyword id="KW-1185">Reference proteome</keyword>
<keyword id="KW-0813">Transport</keyword>
<accession>O00186</accession>
<accession>A8K269</accession>
<accession>A8K5K7</accession>
<accession>Q53FW1</accession>
<accession>Q86YJ3</accession>
<accession>Q9UPD7</accession>
<dbReference type="EMBL" id="D63506">
    <property type="protein sequence ID" value="BAA19482.1"/>
    <property type="molecule type" value="mRNA"/>
</dbReference>
<dbReference type="EMBL" id="AF032922">
    <property type="protein sequence ID" value="AAC69606.1"/>
    <property type="molecule type" value="mRNA"/>
</dbReference>
<dbReference type="EMBL" id="AK290134">
    <property type="protein sequence ID" value="BAF82823.1"/>
    <property type="molecule type" value="mRNA"/>
</dbReference>
<dbReference type="EMBL" id="AK291322">
    <property type="protein sequence ID" value="BAF84011.1"/>
    <property type="molecule type" value="mRNA"/>
</dbReference>
<dbReference type="EMBL" id="AK312910">
    <property type="protein sequence ID" value="BAG35756.1"/>
    <property type="molecule type" value="mRNA"/>
</dbReference>
<dbReference type="EMBL" id="AK223170">
    <property type="protein sequence ID" value="BAD96890.1"/>
    <property type="molecule type" value="mRNA"/>
</dbReference>
<dbReference type="EMBL" id="AL591719">
    <property type="status" value="NOT_ANNOTATED_CDS"/>
    <property type="molecule type" value="Genomic_DNA"/>
</dbReference>
<dbReference type="EMBL" id="AL449266">
    <property type="status" value="NOT_ANNOTATED_CDS"/>
    <property type="molecule type" value="Genomic_DNA"/>
</dbReference>
<dbReference type="EMBL" id="CH471122">
    <property type="protein sequence ID" value="EAW56330.1"/>
    <property type="molecule type" value="Genomic_DNA"/>
</dbReference>
<dbReference type="EMBL" id="BC038099">
    <property type="protein sequence ID" value="AAH38099.1"/>
    <property type="molecule type" value="mRNA"/>
</dbReference>
<dbReference type="EMBL" id="BC047764">
    <property type="protein sequence ID" value="AAH47764.1"/>
    <property type="molecule type" value="mRNA"/>
</dbReference>
<dbReference type="CCDS" id="CCDS790.1"/>
<dbReference type="RefSeq" id="NP_009200.2">
    <property type="nucleotide sequence ID" value="NM_007269.4"/>
</dbReference>
<dbReference type="SMR" id="O00186"/>
<dbReference type="BioGRID" id="112683">
    <property type="interactions" value="103"/>
</dbReference>
<dbReference type="FunCoup" id="O00186">
    <property type="interactions" value="1973"/>
</dbReference>
<dbReference type="IntAct" id="O00186">
    <property type="interactions" value="50"/>
</dbReference>
<dbReference type="MINT" id="O00186"/>
<dbReference type="STRING" id="9606.ENSP00000359025"/>
<dbReference type="iPTMnet" id="O00186"/>
<dbReference type="MetOSite" id="O00186"/>
<dbReference type="PhosphoSitePlus" id="O00186"/>
<dbReference type="SwissPalm" id="O00186"/>
<dbReference type="BioMuta" id="STXBP3"/>
<dbReference type="jPOST" id="O00186"/>
<dbReference type="MassIVE" id="O00186"/>
<dbReference type="PaxDb" id="9606-ENSP00000359025"/>
<dbReference type="PeptideAtlas" id="O00186"/>
<dbReference type="ProteomicsDB" id="47766"/>
<dbReference type="Pumba" id="O00186"/>
<dbReference type="Antibodypedia" id="20045">
    <property type="antibodies" value="223 antibodies from 30 providers"/>
</dbReference>
<dbReference type="DNASU" id="6814"/>
<dbReference type="Ensembl" id="ENST00000370008.4">
    <property type="protein sequence ID" value="ENSP00000359025.3"/>
    <property type="gene ID" value="ENSG00000116266.11"/>
</dbReference>
<dbReference type="GeneID" id="6814"/>
<dbReference type="KEGG" id="hsa:6814"/>
<dbReference type="MANE-Select" id="ENST00000370008.4">
    <property type="protein sequence ID" value="ENSP00000359025.3"/>
    <property type="RefSeq nucleotide sequence ID" value="NM_007269.4"/>
    <property type="RefSeq protein sequence ID" value="NP_009200.2"/>
</dbReference>
<dbReference type="UCSC" id="uc001dvy.4">
    <property type="organism name" value="human"/>
</dbReference>
<dbReference type="AGR" id="HGNC:11446"/>
<dbReference type="CTD" id="6814"/>
<dbReference type="DisGeNET" id="6814"/>
<dbReference type="GeneCards" id="STXBP3"/>
<dbReference type="HGNC" id="HGNC:11446">
    <property type="gene designation" value="STXBP3"/>
</dbReference>
<dbReference type="HPA" id="ENSG00000116266">
    <property type="expression patterns" value="Low tissue specificity"/>
</dbReference>
<dbReference type="MalaCards" id="STXBP3"/>
<dbReference type="MIM" id="608339">
    <property type="type" value="gene"/>
</dbReference>
<dbReference type="neXtProt" id="NX_O00186"/>
<dbReference type="OpenTargets" id="ENSG00000116266"/>
<dbReference type="PharmGKB" id="PA36243"/>
<dbReference type="VEuPathDB" id="HostDB:ENSG00000116266"/>
<dbReference type="eggNOG" id="KOG1300">
    <property type="taxonomic scope" value="Eukaryota"/>
</dbReference>
<dbReference type="GeneTree" id="ENSGT00940000157607"/>
<dbReference type="HOGENOM" id="CLU_009210_2_0_1"/>
<dbReference type="InParanoid" id="O00186"/>
<dbReference type="OMA" id="LSTCVRM"/>
<dbReference type="OrthoDB" id="2228at2759"/>
<dbReference type="PAN-GO" id="O00186">
    <property type="GO annotations" value="7 GO annotations based on evolutionary models"/>
</dbReference>
<dbReference type="PhylomeDB" id="O00186"/>
<dbReference type="TreeFam" id="TF313242"/>
<dbReference type="PathwayCommons" id="O00186"/>
<dbReference type="Reactome" id="R-HSA-114516">
    <property type="pathway name" value="Disinhibition of SNARE formation"/>
</dbReference>
<dbReference type="Reactome" id="R-HSA-1445148">
    <property type="pathway name" value="Translocation of SLC2A4 (GLUT4) to the plasma membrane"/>
</dbReference>
<dbReference type="SignaLink" id="O00186"/>
<dbReference type="BioGRID-ORCS" id="6814">
    <property type="hits" value="151 hits in 1165 CRISPR screens"/>
</dbReference>
<dbReference type="CD-CODE" id="91857CE7">
    <property type="entry name" value="Nucleolus"/>
</dbReference>
<dbReference type="CD-CODE" id="FB4E32DD">
    <property type="entry name" value="Presynaptic clusters and postsynaptic densities"/>
</dbReference>
<dbReference type="ChiTaRS" id="STXBP3">
    <property type="organism name" value="human"/>
</dbReference>
<dbReference type="GeneWiki" id="Syntaxin_binding_protein_3"/>
<dbReference type="GenomeRNAi" id="6814"/>
<dbReference type="Pharos" id="O00186">
    <property type="development level" value="Tbio"/>
</dbReference>
<dbReference type="PRO" id="PR:O00186"/>
<dbReference type="Proteomes" id="UP000005640">
    <property type="component" value="Chromosome 1"/>
</dbReference>
<dbReference type="RNAct" id="O00186">
    <property type="molecule type" value="protein"/>
</dbReference>
<dbReference type="Bgee" id="ENSG00000116266">
    <property type="expression patterns" value="Expressed in corpus callosum and 202 other cell types or tissues"/>
</dbReference>
<dbReference type="GO" id="GO:0016324">
    <property type="term" value="C:apical plasma membrane"/>
    <property type="evidence" value="ECO:0007669"/>
    <property type="project" value="Ensembl"/>
</dbReference>
<dbReference type="GO" id="GO:0016323">
    <property type="term" value="C:basolateral plasma membrane"/>
    <property type="evidence" value="ECO:0007669"/>
    <property type="project" value="Ensembl"/>
</dbReference>
<dbReference type="GO" id="GO:0005829">
    <property type="term" value="C:cytosol"/>
    <property type="evidence" value="ECO:0000314"/>
    <property type="project" value="UniProtKB"/>
</dbReference>
<dbReference type="GO" id="GO:0070062">
    <property type="term" value="C:extracellular exosome"/>
    <property type="evidence" value="ECO:0007005"/>
    <property type="project" value="UniProtKB"/>
</dbReference>
<dbReference type="GO" id="GO:0045335">
    <property type="term" value="C:phagocytic vesicle"/>
    <property type="evidence" value="ECO:0007669"/>
    <property type="project" value="Ensembl"/>
</dbReference>
<dbReference type="GO" id="GO:0005886">
    <property type="term" value="C:plasma membrane"/>
    <property type="evidence" value="ECO:0000314"/>
    <property type="project" value="UniProtKB"/>
</dbReference>
<dbReference type="GO" id="GO:0031091">
    <property type="term" value="C:platelet alpha granule"/>
    <property type="evidence" value="ECO:0000314"/>
    <property type="project" value="UniProtKB"/>
</dbReference>
<dbReference type="GO" id="GO:0098793">
    <property type="term" value="C:presynapse"/>
    <property type="evidence" value="ECO:0007669"/>
    <property type="project" value="GOC"/>
</dbReference>
<dbReference type="GO" id="GO:0030141">
    <property type="term" value="C:secretory granule"/>
    <property type="evidence" value="ECO:0000318"/>
    <property type="project" value="GO_Central"/>
</dbReference>
<dbReference type="GO" id="GO:0042581">
    <property type="term" value="C:specific granule"/>
    <property type="evidence" value="ECO:0000314"/>
    <property type="project" value="UniProtKB"/>
</dbReference>
<dbReference type="GO" id="GO:0070820">
    <property type="term" value="C:tertiary granule"/>
    <property type="evidence" value="ECO:0000314"/>
    <property type="project" value="UniProtKB"/>
</dbReference>
<dbReference type="GO" id="GO:0044877">
    <property type="term" value="F:protein-containing complex binding"/>
    <property type="evidence" value="ECO:0007669"/>
    <property type="project" value="Ensembl"/>
</dbReference>
<dbReference type="GO" id="GO:0019905">
    <property type="term" value="F:syntaxin binding"/>
    <property type="evidence" value="ECO:0000353"/>
    <property type="project" value="UniProtKB"/>
</dbReference>
<dbReference type="GO" id="GO:0017075">
    <property type="term" value="F:syntaxin-1 binding"/>
    <property type="evidence" value="ECO:0000318"/>
    <property type="project" value="GO_Central"/>
</dbReference>
<dbReference type="GO" id="GO:0007420">
    <property type="term" value="P:brain development"/>
    <property type="evidence" value="ECO:0007669"/>
    <property type="project" value="Ensembl"/>
</dbReference>
<dbReference type="GO" id="GO:0071346">
    <property type="term" value="P:cellular response to type II interferon"/>
    <property type="evidence" value="ECO:0007669"/>
    <property type="project" value="Ensembl"/>
</dbReference>
<dbReference type="GO" id="GO:0030073">
    <property type="term" value="P:insulin secretion"/>
    <property type="evidence" value="ECO:0007669"/>
    <property type="project" value="Ensembl"/>
</dbReference>
<dbReference type="GO" id="GO:0001678">
    <property type="term" value="P:intracellular glucose homeostasis"/>
    <property type="evidence" value="ECO:0007669"/>
    <property type="project" value="Ensembl"/>
</dbReference>
<dbReference type="GO" id="GO:0006886">
    <property type="term" value="P:intracellular protein transport"/>
    <property type="evidence" value="ECO:0000318"/>
    <property type="project" value="GO_Central"/>
</dbReference>
<dbReference type="GO" id="GO:0045955">
    <property type="term" value="P:negative regulation of calcium ion-dependent exocytosis"/>
    <property type="evidence" value="ECO:0000315"/>
    <property type="project" value="UniProtKB"/>
</dbReference>
<dbReference type="GO" id="GO:0046325">
    <property type="term" value="P:negative regulation of D-glucose import"/>
    <property type="evidence" value="ECO:0007669"/>
    <property type="project" value="Ensembl"/>
</dbReference>
<dbReference type="GO" id="GO:0043312">
    <property type="term" value="P:neutrophil degranulation"/>
    <property type="evidence" value="ECO:0000270"/>
    <property type="project" value="UniProtKB"/>
</dbReference>
<dbReference type="GO" id="GO:0070527">
    <property type="term" value="P:platelet aggregation"/>
    <property type="evidence" value="ECO:0000315"/>
    <property type="project" value="UniProtKB"/>
</dbReference>
<dbReference type="GO" id="GO:0099525">
    <property type="term" value="P:presynaptic dense core vesicle exocytosis"/>
    <property type="evidence" value="ECO:0000318"/>
    <property type="project" value="GO_Central"/>
</dbReference>
<dbReference type="GO" id="GO:0022615">
    <property type="term" value="P:protein to membrane docking"/>
    <property type="evidence" value="ECO:0007669"/>
    <property type="project" value="Ensembl"/>
</dbReference>
<dbReference type="GO" id="GO:0032868">
    <property type="term" value="P:response to insulin"/>
    <property type="evidence" value="ECO:0007669"/>
    <property type="project" value="Ensembl"/>
</dbReference>
<dbReference type="GO" id="GO:0006904">
    <property type="term" value="P:vesicle docking involved in exocytosis"/>
    <property type="evidence" value="ECO:0000318"/>
    <property type="project" value="GO_Central"/>
</dbReference>
<dbReference type="FunFam" id="3.40.50.2060:FF:000006">
    <property type="entry name" value="Syntaxin binding protein 3"/>
    <property type="match status" value="1"/>
</dbReference>
<dbReference type="FunFam" id="3.90.830.10:FF:000001">
    <property type="entry name" value="syntaxin-binding protein 1 isoform X2"/>
    <property type="match status" value="1"/>
</dbReference>
<dbReference type="FunFam" id="1.25.40.60:FF:000004">
    <property type="entry name" value="syntaxin-binding protein 3 isoform X2"/>
    <property type="match status" value="1"/>
</dbReference>
<dbReference type="Gene3D" id="1.25.40.60">
    <property type="match status" value="1"/>
</dbReference>
<dbReference type="Gene3D" id="3.40.50.1910">
    <property type="match status" value="1"/>
</dbReference>
<dbReference type="Gene3D" id="3.40.50.2060">
    <property type="match status" value="1"/>
</dbReference>
<dbReference type="Gene3D" id="3.90.830.10">
    <property type="entry name" value="Syntaxin Binding Protein 1, Chain A, domain 2"/>
    <property type="match status" value="1"/>
</dbReference>
<dbReference type="InterPro" id="IPR043154">
    <property type="entry name" value="Sec-1-like_dom1"/>
</dbReference>
<dbReference type="InterPro" id="IPR043127">
    <property type="entry name" value="Sec-1-like_dom3a"/>
</dbReference>
<dbReference type="InterPro" id="IPR001619">
    <property type="entry name" value="Sec1-like"/>
</dbReference>
<dbReference type="InterPro" id="IPR027482">
    <property type="entry name" value="Sec1-like_dom2"/>
</dbReference>
<dbReference type="InterPro" id="IPR036045">
    <property type="entry name" value="Sec1-like_sf"/>
</dbReference>
<dbReference type="PANTHER" id="PTHR11679">
    <property type="entry name" value="VESICLE PROTEIN SORTING-ASSOCIATED"/>
    <property type="match status" value="1"/>
</dbReference>
<dbReference type="Pfam" id="PF00995">
    <property type="entry name" value="Sec1"/>
    <property type="match status" value="1"/>
</dbReference>
<dbReference type="PIRSF" id="PIRSF005715">
    <property type="entry name" value="VPS45_Sec1"/>
    <property type="match status" value="1"/>
</dbReference>
<dbReference type="SUPFAM" id="SSF56815">
    <property type="entry name" value="Sec1/munc18-like (SM) proteins"/>
    <property type="match status" value="1"/>
</dbReference>
<gene>
    <name type="primary">STXBP3</name>
</gene>